<dbReference type="EC" id="3.5.1.5" evidence="1"/>
<dbReference type="EMBL" id="AP010656">
    <property type="protein sequence ID" value="BAG83490.1"/>
    <property type="molecule type" value="Genomic_DNA"/>
</dbReference>
<dbReference type="RefSeq" id="WP_012573251.1">
    <property type="nucleotide sequence ID" value="NC_011565.1"/>
</dbReference>
<dbReference type="SMR" id="B6YQL8"/>
<dbReference type="STRING" id="511995.CFPG_227"/>
<dbReference type="MEROPS" id="M38.982"/>
<dbReference type="KEGG" id="aps:CFPG_227"/>
<dbReference type="eggNOG" id="COG0804">
    <property type="taxonomic scope" value="Bacteria"/>
</dbReference>
<dbReference type="HOGENOM" id="CLU_000980_0_0_10"/>
<dbReference type="OrthoDB" id="9802793at2"/>
<dbReference type="UniPathway" id="UPA00258">
    <property type="reaction ID" value="UER00370"/>
</dbReference>
<dbReference type="Proteomes" id="UP000000723">
    <property type="component" value="Chromosome"/>
</dbReference>
<dbReference type="GO" id="GO:0005737">
    <property type="term" value="C:cytoplasm"/>
    <property type="evidence" value="ECO:0007669"/>
    <property type="project" value="UniProtKB-SubCell"/>
</dbReference>
<dbReference type="GO" id="GO:0016151">
    <property type="term" value="F:nickel cation binding"/>
    <property type="evidence" value="ECO:0007669"/>
    <property type="project" value="UniProtKB-UniRule"/>
</dbReference>
<dbReference type="GO" id="GO:0009039">
    <property type="term" value="F:urease activity"/>
    <property type="evidence" value="ECO:0007669"/>
    <property type="project" value="UniProtKB-UniRule"/>
</dbReference>
<dbReference type="GO" id="GO:0043419">
    <property type="term" value="P:urea catabolic process"/>
    <property type="evidence" value="ECO:0007669"/>
    <property type="project" value="UniProtKB-UniRule"/>
</dbReference>
<dbReference type="CDD" id="cd00375">
    <property type="entry name" value="Urease_alpha"/>
    <property type="match status" value="1"/>
</dbReference>
<dbReference type="Gene3D" id="3.20.20.140">
    <property type="entry name" value="Metal-dependent hydrolases"/>
    <property type="match status" value="1"/>
</dbReference>
<dbReference type="Gene3D" id="2.30.40.10">
    <property type="entry name" value="Urease, subunit C, domain 1"/>
    <property type="match status" value="1"/>
</dbReference>
<dbReference type="HAMAP" id="MF_01953">
    <property type="entry name" value="Urease_alpha"/>
    <property type="match status" value="1"/>
</dbReference>
<dbReference type="InterPro" id="IPR006680">
    <property type="entry name" value="Amidohydro-rel"/>
</dbReference>
<dbReference type="InterPro" id="IPR011059">
    <property type="entry name" value="Metal-dep_hydrolase_composite"/>
</dbReference>
<dbReference type="InterPro" id="IPR032466">
    <property type="entry name" value="Metal_Hydrolase"/>
</dbReference>
<dbReference type="InterPro" id="IPR011612">
    <property type="entry name" value="Urease_alpha_N_dom"/>
</dbReference>
<dbReference type="InterPro" id="IPR050112">
    <property type="entry name" value="Urease_alpha_subunit"/>
</dbReference>
<dbReference type="InterPro" id="IPR005848">
    <property type="entry name" value="Urease_asu"/>
</dbReference>
<dbReference type="InterPro" id="IPR017951">
    <property type="entry name" value="Urease_asu_c"/>
</dbReference>
<dbReference type="InterPro" id="IPR029754">
    <property type="entry name" value="Urease_Ni-bd"/>
</dbReference>
<dbReference type="NCBIfam" id="NF009686">
    <property type="entry name" value="PRK13207.1"/>
    <property type="match status" value="1"/>
</dbReference>
<dbReference type="NCBIfam" id="TIGR01792">
    <property type="entry name" value="urease_alph"/>
    <property type="match status" value="1"/>
</dbReference>
<dbReference type="PANTHER" id="PTHR43440">
    <property type="entry name" value="UREASE"/>
    <property type="match status" value="1"/>
</dbReference>
<dbReference type="PANTHER" id="PTHR43440:SF1">
    <property type="entry name" value="UREASE"/>
    <property type="match status" value="1"/>
</dbReference>
<dbReference type="Pfam" id="PF01979">
    <property type="entry name" value="Amidohydro_1"/>
    <property type="match status" value="1"/>
</dbReference>
<dbReference type="Pfam" id="PF00449">
    <property type="entry name" value="Urease_alpha"/>
    <property type="match status" value="1"/>
</dbReference>
<dbReference type="PRINTS" id="PR01752">
    <property type="entry name" value="UREASE"/>
</dbReference>
<dbReference type="SUPFAM" id="SSF51338">
    <property type="entry name" value="Composite domain of metallo-dependent hydrolases"/>
    <property type="match status" value="2"/>
</dbReference>
<dbReference type="SUPFAM" id="SSF51556">
    <property type="entry name" value="Metallo-dependent hydrolases"/>
    <property type="match status" value="1"/>
</dbReference>
<dbReference type="PROSITE" id="PS01120">
    <property type="entry name" value="UREASE_1"/>
    <property type="match status" value="1"/>
</dbReference>
<dbReference type="PROSITE" id="PS51368">
    <property type="entry name" value="UREASE_3"/>
    <property type="match status" value="1"/>
</dbReference>
<comment type="catalytic activity">
    <reaction evidence="1">
        <text>urea + 2 H2O + H(+) = hydrogencarbonate + 2 NH4(+)</text>
        <dbReference type="Rhea" id="RHEA:20557"/>
        <dbReference type="ChEBI" id="CHEBI:15377"/>
        <dbReference type="ChEBI" id="CHEBI:15378"/>
        <dbReference type="ChEBI" id="CHEBI:16199"/>
        <dbReference type="ChEBI" id="CHEBI:17544"/>
        <dbReference type="ChEBI" id="CHEBI:28938"/>
        <dbReference type="EC" id="3.5.1.5"/>
    </reaction>
</comment>
<comment type="cofactor">
    <cofactor evidence="1">
        <name>Ni cation</name>
        <dbReference type="ChEBI" id="CHEBI:25516"/>
    </cofactor>
    <text evidence="1">Binds 2 nickel ions per subunit.</text>
</comment>
<comment type="pathway">
    <text evidence="1">Nitrogen metabolism; urea degradation; CO(2) and NH(3) from urea (urease route): step 1/1.</text>
</comment>
<comment type="subunit">
    <text evidence="1">Heterotrimer of UreA (gamma), UreB (beta) and UreC (alpha) subunits. Three heterotrimers associate to form the active enzyme.</text>
</comment>
<comment type="subcellular location">
    <subcellularLocation>
        <location evidence="1">Cytoplasm</location>
    </subcellularLocation>
</comment>
<comment type="PTM">
    <text evidence="1">Carboxylation allows a single lysine to coordinate two nickel ions.</text>
</comment>
<comment type="similarity">
    <text evidence="1">Belongs to the metallo-dependent hydrolases superfamily. Urease alpha subunit family.</text>
</comment>
<feature type="chain" id="PRO_1000188862" description="Urease subunit alpha">
    <location>
        <begin position="1"/>
        <end position="568"/>
    </location>
</feature>
<feature type="domain" description="Urease" evidence="1">
    <location>
        <begin position="132"/>
        <end position="568"/>
    </location>
</feature>
<feature type="active site" description="Proton donor" evidence="1">
    <location>
        <position position="322"/>
    </location>
</feature>
<feature type="binding site" evidence="1">
    <location>
        <position position="137"/>
    </location>
    <ligand>
        <name>Ni(2+)</name>
        <dbReference type="ChEBI" id="CHEBI:49786"/>
        <label>1</label>
    </ligand>
</feature>
<feature type="binding site" evidence="1">
    <location>
        <position position="139"/>
    </location>
    <ligand>
        <name>Ni(2+)</name>
        <dbReference type="ChEBI" id="CHEBI:49786"/>
        <label>1</label>
    </ligand>
</feature>
<feature type="binding site" description="via carbamate group" evidence="1">
    <location>
        <position position="219"/>
    </location>
    <ligand>
        <name>Ni(2+)</name>
        <dbReference type="ChEBI" id="CHEBI:49786"/>
        <label>1</label>
    </ligand>
</feature>
<feature type="binding site" description="via carbamate group" evidence="1">
    <location>
        <position position="219"/>
    </location>
    <ligand>
        <name>Ni(2+)</name>
        <dbReference type="ChEBI" id="CHEBI:49786"/>
        <label>2</label>
    </ligand>
</feature>
<feature type="binding site" evidence="1">
    <location>
        <position position="221"/>
    </location>
    <ligand>
        <name>substrate</name>
    </ligand>
</feature>
<feature type="binding site" evidence="1">
    <location>
        <position position="248"/>
    </location>
    <ligand>
        <name>Ni(2+)</name>
        <dbReference type="ChEBI" id="CHEBI:49786"/>
        <label>2</label>
    </ligand>
</feature>
<feature type="binding site" evidence="1">
    <location>
        <position position="274"/>
    </location>
    <ligand>
        <name>Ni(2+)</name>
        <dbReference type="ChEBI" id="CHEBI:49786"/>
        <label>2</label>
    </ligand>
</feature>
<feature type="binding site" evidence="1">
    <location>
        <position position="362"/>
    </location>
    <ligand>
        <name>Ni(2+)</name>
        <dbReference type="ChEBI" id="CHEBI:49786"/>
        <label>1</label>
    </ligand>
</feature>
<feature type="modified residue" description="N6-carboxylysine" evidence="1">
    <location>
        <position position="219"/>
    </location>
</feature>
<evidence type="ECO:0000255" key="1">
    <source>
        <dbReference type="HAMAP-Rule" id="MF_01953"/>
    </source>
</evidence>
<name>URE1_AZOPC</name>
<accession>B6YQL8</accession>
<sequence>MAQINRKLYSSMYGITTGDIVTLGDTNLKIQVEKDYTTYGEECVFGGGKVIRDGMGQASGFCDEEVLDMVITNALIIDYKGIYKADIGIKNGKIKGIGKAGNPHIQPGVSPTLIIGTITEVVSGEGRILTAGAIDTHVHYISPQQADEALASGITTFVGGGTGPATGTYATTCTPGWYLRKMMEATDNIPINFGFLGKGNSSKSKALEGQIKAGALGLKLHEDWGSTPSVIDTSLKVADEYDVQICIHTDSINECGYIEDTLCAIDGRTIHAYHVEGAGGGHAPDIMKACEYANILPSSTTPTNPYSLNTIDEHLDMLMVCHHLDFNNPEDISFAQSRIRQQTIGAEDFLHDMGAISIFTSDSQAMGRIGEVICRTWQIASRMKEIRGFLSEDQMTGNDNYRVRRYIAKYTINAALAHGLSHIVGSVEKGKLADLVLWRPEFFGTKPDIVIKGGMIAYAQMGDPNASIPTPEPYISRPMYGAFGNAASATSCLFISEASIEAIKGYGLNKMLTVVKGCRVISKNDLKLNNYMPCIDIDSKTFEVSIDGVLISVKPAKKLPLAQLYNLF</sequence>
<gene>
    <name evidence="1" type="primary">ureC</name>
    <name type="ordered locus">CFPG_227</name>
</gene>
<proteinExistence type="inferred from homology"/>
<protein>
    <recommendedName>
        <fullName evidence="1">Urease subunit alpha</fullName>
        <ecNumber evidence="1">3.5.1.5</ecNumber>
    </recommendedName>
    <alternativeName>
        <fullName evidence="1">Urea amidohydrolase subunit alpha</fullName>
    </alternativeName>
</protein>
<organism>
    <name type="scientific">Azobacteroides pseudotrichonymphae genomovar. CFP2</name>
    <dbReference type="NCBI Taxonomy" id="511995"/>
    <lineage>
        <taxon>Bacteria</taxon>
        <taxon>Pseudomonadati</taxon>
        <taxon>Bacteroidota</taxon>
        <taxon>Bacteroidia</taxon>
        <taxon>Bacteroidales</taxon>
        <taxon>Candidatus Azobacteroides</taxon>
    </lineage>
</organism>
<keyword id="KW-0963">Cytoplasm</keyword>
<keyword id="KW-0378">Hydrolase</keyword>
<keyword id="KW-0479">Metal-binding</keyword>
<keyword id="KW-0533">Nickel</keyword>
<keyword id="KW-1185">Reference proteome</keyword>
<reference key="1">
    <citation type="journal article" date="2008" name="Science">
        <title>Genome of an endosymbiont coupling N2 fixation to cellulolysis within RT protist cells in termite gut.</title>
        <authorList>
            <person name="Hongoh Y."/>
            <person name="Sharma V.K."/>
            <person name="Prakash T."/>
            <person name="Noda S."/>
            <person name="Toh H."/>
            <person name="Taylor T.D."/>
            <person name="Kudo T."/>
            <person name="Sakaki Y."/>
            <person name="Toyoda A."/>
            <person name="Hattori M."/>
            <person name="Ohkuma M."/>
        </authorList>
    </citation>
    <scope>NUCLEOTIDE SEQUENCE [LARGE SCALE GENOMIC DNA]</scope>
</reference>